<sequence>MLTFNQLIKNSRKKKNKFKNSILNRCPQKKGICLKVFTKSPKKPNSALRKVVKIRLSNNKEIIAYIPGEGYAIQEHNYALIKGGKVQDLPGIRYKIIRGALNVSGVKNRKSSRSKYGTKK</sequence>
<accession>Q7YN68</accession>
<proteinExistence type="inferred from homology"/>
<feature type="chain" id="PRO_0000296082" description="Small ribosomal subunit protein uS12c">
    <location>
        <begin position="1"/>
        <end position="120"/>
    </location>
</feature>
<protein>
    <recommendedName>
        <fullName evidence="2">Small ribosomal subunit protein uS12c</fullName>
    </recommendedName>
    <alternativeName>
        <fullName>Apicoplast 30S ribosomal protein S12</fullName>
    </alternativeName>
</protein>
<comment type="function">
    <text evidence="1">With S4 and S5 plays an important role in translational accuracy. Located at the interface of the 30S and 50S subunits (By similarity).</text>
</comment>
<comment type="subunit">
    <text evidence="1">Part of the 30S ribosomal subunit.</text>
</comment>
<comment type="subcellular location">
    <subcellularLocation>
        <location>Plastid</location>
        <location>Apicoplast</location>
    </subcellularLocation>
</comment>
<comment type="similarity">
    <text evidence="2">Belongs to the universal ribosomal protein uS12 family.</text>
</comment>
<evidence type="ECO:0000250" key="1"/>
<evidence type="ECO:0000305" key="2"/>
<geneLocation type="apicoplast"/>
<gene>
    <name type="primary">rps12</name>
</gene>
<organism>
    <name type="scientific">Eimeria tenella</name>
    <name type="common">Coccidian parasite</name>
    <dbReference type="NCBI Taxonomy" id="5802"/>
    <lineage>
        <taxon>Eukaryota</taxon>
        <taxon>Sar</taxon>
        <taxon>Alveolata</taxon>
        <taxon>Apicomplexa</taxon>
        <taxon>Conoidasida</taxon>
        <taxon>Coccidia</taxon>
        <taxon>Eucoccidiorida</taxon>
        <taxon>Eimeriorina</taxon>
        <taxon>Eimeriidae</taxon>
        <taxon>Eimeria</taxon>
    </lineage>
</organism>
<keyword id="KW-0933">Apicoplast</keyword>
<keyword id="KW-0934">Plastid</keyword>
<keyword id="KW-0687">Ribonucleoprotein</keyword>
<keyword id="KW-0689">Ribosomal protein</keyword>
<keyword id="KW-0694">RNA-binding</keyword>
<keyword id="KW-0699">rRNA-binding</keyword>
<keyword id="KW-0820">tRNA-binding</keyword>
<dbReference type="EMBL" id="AY217738">
    <property type="protein sequence ID" value="AAO40235.1"/>
    <property type="molecule type" value="Genomic_DNA"/>
</dbReference>
<dbReference type="RefSeq" id="NP_852634.1">
    <property type="nucleotide sequence ID" value="NC_004823.1"/>
</dbReference>
<dbReference type="SMR" id="Q7YN68"/>
<dbReference type="GeneID" id="1263690"/>
<dbReference type="VEuPathDB" id="ToxoDB:ETH2_API03400"/>
<dbReference type="GO" id="GO:0020011">
    <property type="term" value="C:apicoplast"/>
    <property type="evidence" value="ECO:0007669"/>
    <property type="project" value="UniProtKB-SubCell"/>
</dbReference>
<dbReference type="GO" id="GO:0015935">
    <property type="term" value="C:small ribosomal subunit"/>
    <property type="evidence" value="ECO:0007669"/>
    <property type="project" value="InterPro"/>
</dbReference>
<dbReference type="GO" id="GO:0019843">
    <property type="term" value="F:rRNA binding"/>
    <property type="evidence" value="ECO:0007669"/>
    <property type="project" value="UniProtKB-KW"/>
</dbReference>
<dbReference type="GO" id="GO:0003735">
    <property type="term" value="F:structural constituent of ribosome"/>
    <property type="evidence" value="ECO:0007669"/>
    <property type="project" value="InterPro"/>
</dbReference>
<dbReference type="GO" id="GO:0000049">
    <property type="term" value="F:tRNA binding"/>
    <property type="evidence" value="ECO:0007669"/>
    <property type="project" value="UniProtKB-KW"/>
</dbReference>
<dbReference type="GO" id="GO:0006412">
    <property type="term" value="P:translation"/>
    <property type="evidence" value="ECO:0007669"/>
    <property type="project" value="InterPro"/>
</dbReference>
<dbReference type="CDD" id="cd03368">
    <property type="entry name" value="Ribosomal_S12"/>
    <property type="match status" value="1"/>
</dbReference>
<dbReference type="FunFam" id="2.40.50.140:FF:000099">
    <property type="entry name" value="Ribosomal protein S12, mitochondrial"/>
    <property type="match status" value="1"/>
</dbReference>
<dbReference type="Gene3D" id="2.40.50.140">
    <property type="entry name" value="Nucleic acid-binding proteins"/>
    <property type="match status" value="1"/>
</dbReference>
<dbReference type="InterPro" id="IPR012340">
    <property type="entry name" value="NA-bd_OB-fold"/>
</dbReference>
<dbReference type="InterPro" id="IPR006032">
    <property type="entry name" value="Ribosomal_uS12"/>
</dbReference>
<dbReference type="InterPro" id="IPR005679">
    <property type="entry name" value="Ribosomal_uS12_bac"/>
</dbReference>
<dbReference type="NCBIfam" id="TIGR00981">
    <property type="entry name" value="rpsL_bact"/>
    <property type="match status" value="1"/>
</dbReference>
<dbReference type="PANTHER" id="PTHR11652">
    <property type="entry name" value="30S RIBOSOMAL PROTEIN S12 FAMILY MEMBER"/>
    <property type="match status" value="1"/>
</dbReference>
<dbReference type="Pfam" id="PF00164">
    <property type="entry name" value="Ribosom_S12_S23"/>
    <property type="match status" value="1"/>
</dbReference>
<dbReference type="PIRSF" id="PIRSF002133">
    <property type="entry name" value="Ribosomal_S12/S23"/>
    <property type="match status" value="1"/>
</dbReference>
<dbReference type="PRINTS" id="PR01034">
    <property type="entry name" value="RIBOSOMALS12"/>
</dbReference>
<dbReference type="SUPFAM" id="SSF50249">
    <property type="entry name" value="Nucleic acid-binding proteins"/>
    <property type="match status" value="1"/>
</dbReference>
<dbReference type="PROSITE" id="PS00055">
    <property type="entry name" value="RIBOSOMAL_S12"/>
    <property type="match status" value="1"/>
</dbReference>
<name>RR12_EIMTE</name>
<reference key="1">
    <citation type="journal article" date="2003" name="Gene">
        <title>Apicoplast genome of the coccidian Eimeria tenella.</title>
        <authorList>
            <person name="Cai X."/>
            <person name="Fuller A.L."/>
            <person name="McDougald L.R."/>
            <person name="Zhu G."/>
        </authorList>
    </citation>
    <scope>NUCLEOTIDE SEQUENCE [LARGE SCALE GENOMIC DNA]</scope>
    <source>
        <strain>Penn State</strain>
    </source>
</reference>